<name>RNPA_CITBB</name>
<protein>
    <recommendedName>
        <fullName evidence="1">Ribonuclease P protein component</fullName>
        <shortName evidence="1">RNase P protein</shortName>
        <shortName evidence="1">RNaseP protein</shortName>
        <ecNumber evidence="1">3.1.26.5</ecNumber>
    </recommendedName>
    <alternativeName>
        <fullName evidence="1">Protein C5</fullName>
    </alternativeName>
</protein>
<reference key="1">
    <citation type="submission" date="2008-07" db="EMBL/GenBank/DDBJ databases">
        <title>Complete sequence of Geobacter bemidjiensis BEM.</title>
        <authorList>
            <consortium name="US DOE Joint Genome Institute"/>
            <person name="Lucas S."/>
            <person name="Copeland A."/>
            <person name="Lapidus A."/>
            <person name="Glavina del Rio T."/>
            <person name="Dalin E."/>
            <person name="Tice H."/>
            <person name="Bruce D."/>
            <person name="Goodwin L."/>
            <person name="Pitluck S."/>
            <person name="Kiss H."/>
            <person name="Brettin T."/>
            <person name="Detter J.C."/>
            <person name="Han C."/>
            <person name="Kuske C.R."/>
            <person name="Schmutz J."/>
            <person name="Larimer F."/>
            <person name="Land M."/>
            <person name="Hauser L."/>
            <person name="Kyrpides N."/>
            <person name="Lykidis A."/>
            <person name="Lovley D."/>
            <person name="Richardson P."/>
        </authorList>
    </citation>
    <scope>NUCLEOTIDE SEQUENCE [LARGE SCALE GENOMIC DNA]</scope>
    <source>
        <strain>ATCC BAA-1014 / DSM 16622 / JCM 12645 / Bem</strain>
    </source>
</reference>
<sequence>MTSSNFPKAERLLRRPEFLQFNEGASKLHTQYFLVLLKPNEGTGTRVGFTVSKKVGNAVVRNSIKRRLREFYRQNKSLFISADINIVAKKGADVLDFHQISTELAAAFGRLRKKYA</sequence>
<keyword id="KW-0255">Endonuclease</keyword>
<keyword id="KW-0378">Hydrolase</keyword>
<keyword id="KW-0540">Nuclease</keyword>
<keyword id="KW-1185">Reference proteome</keyword>
<keyword id="KW-0694">RNA-binding</keyword>
<keyword id="KW-0819">tRNA processing</keyword>
<comment type="function">
    <text evidence="1">RNaseP catalyzes the removal of the 5'-leader sequence from pre-tRNA to produce the mature 5'-terminus. It can also cleave other RNA substrates such as 4.5S RNA. The protein component plays an auxiliary but essential role in vivo by binding to the 5'-leader sequence and broadening the substrate specificity of the ribozyme.</text>
</comment>
<comment type="catalytic activity">
    <reaction evidence="1">
        <text>Endonucleolytic cleavage of RNA, removing 5'-extranucleotides from tRNA precursor.</text>
        <dbReference type="EC" id="3.1.26.5"/>
    </reaction>
</comment>
<comment type="subunit">
    <text evidence="1">Consists of a catalytic RNA component (M1 or rnpB) and a protein subunit.</text>
</comment>
<comment type="similarity">
    <text evidence="1">Belongs to the RnpA family.</text>
</comment>
<accession>B5EGY0</accession>
<feature type="chain" id="PRO_1000194644" description="Ribonuclease P protein component">
    <location>
        <begin position="1"/>
        <end position="116"/>
    </location>
</feature>
<dbReference type="EC" id="3.1.26.5" evidence="1"/>
<dbReference type="EMBL" id="CP001124">
    <property type="protein sequence ID" value="ACH41050.1"/>
    <property type="molecule type" value="Genomic_DNA"/>
</dbReference>
<dbReference type="RefSeq" id="WP_012532488.1">
    <property type="nucleotide sequence ID" value="NC_011146.1"/>
</dbReference>
<dbReference type="SMR" id="B5EGY0"/>
<dbReference type="STRING" id="404380.Gbem_4060"/>
<dbReference type="KEGG" id="gbm:Gbem_4060"/>
<dbReference type="eggNOG" id="COG0594">
    <property type="taxonomic scope" value="Bacteria"/>
</dbReference>
<dbReference type="HOGENOM" id="CLU_117179_9_2_7"/>
<dbReference type="OrthoDB" id="9810867at2"/>
<dbReference type="Proteomes" id="UP000008825">
    <property type="component" value="Chromosome"/>
</dbReference>
<dbReference type="GO" id="GO:0030677">
    <property type="term" value="C:ribonuclease P complex"/>
    <property type="evidence" value="ECO:0007669"/>
    <property type="project" value="TreeGrafter"/>
</dbReference>
<dbReference type="GO" id="GO:0042781">
    <property type="term" value="F:3'-tRNA processing endoribonuclease activity"/>
    <property type="evidence" value="ECO:0007669"/>
    <property type="project" value="TreeGrafter"/>
</dbReference>
<dbReference type="GO" id="GO:0004526">
    <property type="term" value="F:ribonuclease P activity"/>
    <property type="evidence" value="ECO:0007669"/>
    <property type="project" value="UniProtKB-UniRule"/>
</dbReference>
<dbReference type="GO" id="GO:0000049">
    <property type="term" value="F:tRNA binding"/>
    <property type="evidence" value="ECO:0007669"/>
    <property type="project" value="UniProtKB-UniRule"/>
</dbReference>
<dbReference type="GO" id="GO:0001682">
    <property type="term" value="P:tRNA 5'-leader removal"/>
    <property type="evidence" value="ECO:0007669"/>
    <property type="project" value="UniProtKB-UniRule"/>
</dbReference>
<dbReference type="Gene3D" id="3.30.230.10">
    <property type="match status" value="1"/>
</dbReference>
<dbReference type="HAMAP" id="MF_00227">
    <property type="entry name" value="RNase_P"/>
    <property type="match status" value="1"/>
</dbReference>
<dbReference type="InterPro" id="IPR020568">
    <property type="entry name" value="Ribosomal_Su5_D2-typ_SF"/>
</dbReference>
<dbReference type="InterPro" id="IPR014721">
    <property type="entry name" value="Ribsml_uS5_D2-typ_fold_subgr"/>
</dbReference>
<dbReference type="InterPro" id="IPR000100">
    <property type="entry name" value="RNase_P"/>
</dbReference>
<dbReference type="NCBIfam" id="TIGR00188">
    <property type="entry name" value="rnpA"/>
    <property type="match status" value="1"/>
</dbReference>
<dbReference type="PANTHER" id="PTHR33992">
    <property type="entry name" value="RIBONUCLEASE P PROTEIN COMPONENT"/>
    <property type="match status" value="1"/>
</dbReference>
<dbReference type="PANTHER" id="PTHR33992:SF1">
    <property type="entry name" value="RIBONUCLEASE P PROTEIN COMPONENT"/>
    <property type="match status" value="1"/>
</dbReference>
<dbReference type="Pfam" id="PF00825">
    <property type="entry name" value="Ribonuclease_P"/>
    <property type="match status" value="1"/>
</dbReference>
<dbReference type="SUPFAM" id="SSF54211">
    <property type="entry name" value="Ribosomal protein S5 domain 2-like"/>
    <property type="match status" value="1"/>
</dbReference>
<proteinExistence type="inferred from homology"/>
<gene>
    <name evidence="1" type="primary">rnpA</name>
    <name type="ordered locus">Gbem_4060</name>
</gene>
<organism>
    <name type="scientific">Citrifermentans bemidjiense (strain ATCC BAA-1014 / DSM 16622 / JCM 12645 / Bem)</name>
    <name type="common">Geobacter bemidjiensis</name>
    <dbReference type="NCBI Taxonomy" id="404380"/>
    <lineage>
        <taxon>Bacteria</taxon>
        <taxon>Pseudomonadati</taxon>
        <taxon>Thermodesulfobacteriota</taxon>
        <taxon>Desulfuromonadia</taxon>
        <taxon>Geobacterales</taxon>
        <taxon>Geobacteraceae</taxon>
        <taxon>Citrifermentans</taxon>
    </lineage>
</organism>
<evidence type="ECO:0000255" key="1">
    <source>
        <dbReference type="HAMAP-Rule" id="MF_00227"/>
    </source>
</evidence>